<keyword id="KW-0217">Developmental protein</keyword>
<keyword id="KW-0238">DNA-binding</keyword>
<keyword id="KW-0539">Nucleus</keyword>
<keyword id="KW-1185">Reference proteome</keyword>
<keyword id="KW-0804">Transcription</keyword>
<keyword id="KW-0805">Transcription regulation</keyword>
<gene>
    <name type="primary">gcm2</name>
    <name type="ORF">CG3858</name>
</gene>
<protein>
    <recommendedName>
        <fullName>Transcription factor glial cells missing 2</fullName>
    </recommendedName>
    <alternativeName>
        <fullName>Protein glide-2</fullName>
    </alternativeName>
</protein>
<reference key="1">
    <citation type="journal article" date="2001" name="EMBO J.">
        <title>Glide2, a second glial promoting factor in Drosophila melanogaster.</title>
        <authorList>
            <person name="Kammerer M."/>
            <person name="Giangrande A."/>
        </authorList>
    </citation>
    <scope>NUCLEOTIDE SEQUENCE [MRNA]</scope>
    <scope>FUNCTION</scope>
    <scope>TISSUE SPECIFICITY</scope>
    <scope>DEVELOPMENTAL STAGE</scope>
</reference>
<reference key="2">
    <citation type="submission" date="2001-02" db="EMBL/GenBank/DDBJ databases">
        <title>Binary cell-fate decisions in Drosophila neurogenesis and hematopoiesis regulated by Gcm-motif transcription factors.</title>
        <authorList>
            <person name="Hosoya T."/>
            <person name="Iwasaki Y."/>
            <person name="Osato M."/>
            <person name="Higashi-Takizawa C."/>
            <person name="Akiyama-Oda Y."/>
            <person name="Ikenaka K."/>
            <person name="Hiromi Y."/>
            <person name="Hotta Y."/>
        </authorList>
    </citation>
    <scope>NUCLEOTIDE SEQUENCE [MRNA]</scope>
</reference>
<reference key="3">
    <citation type="journal article" date="2000" name="Science">
        <title>The genome sequence of Drosophila melanogaster.</title>
        <authorList>
            <person name="Adams M.D."/>
            <person name="Celniker S.E."/>
            <person name="Holt R.A."/>
            <person name="Evans C.A."/>
            <person name="Gocayne J.D."/>
            <person name="Amanatides P.G."/>
            <person name="Scherer S.E."/>
            <person name="Li P.W."/>
            <person name="Hoskins R.A."/>
            <person name="Galle R.F."/>
            <person name="George R.A."/>
            <person name="Lewis S.E."/>
            <person name="Richards S."/>
            <person name="Ashburner M."/>
            <person name="Henderson S.N."/>
            <person name="Sutton G.G."/>
            <person name="Wortman J.R."/>
            <person name="Yandell M.D."/>
            <person name="Zhang Q."/>
            <person name="Chen L.X."/>
            <person name="Brandon R.C."/>
            <person name="Rogers Y.-H.C."/>
            <person name="Blazej R.G."/>
            <person name="Champe M."/>
            <person name="Pfeiffer B.D."/>
            <person name="Wan K.H."/>
            <person name="Doyle C."/>
            <person name="Baxter E.G."/>
            <person name="Helt G."/>
            <person name="Nelson C.R."/>
            <person name="Miklos G.L.G."/>
            <person name="Abril J.F."/>
            <person name="Agbayani A."/>
            <person name="An H.-J."/>
            <person name="Andrews-Pfannkoch C."/>
            <person name="Baldwin D."/>
            <person name="Ballew R.M."/>
            <person name="Basu A."/>
            <person name="Baxendale J."/>
            <person name="Bayraktaroglu L."/>
            <person name="Beasley E.M."/>
            <person name="Beeson K.Y."/>
            <person name="Benos P.V."/>
            <person name="Berman B.P."/>
            <person name="Bhandari D."/>
            <person name="Bolshakov S."/>
            <person name="Borkova D."/>
            <person name="Botchan M.R."/>
            <person name="Bouck J."/>
            <person name="Brokstein P."/>
            <person name="Brottier P."/>
            <person name="Burtis K.C."/>
            <person name="Busam D.A."/>
            <person name="Butler H."/>
            <person name="Cadieu E."/>
            <person name="Center A."/>
            <person name="Chandra I."/>
            <person name="Cherry J.M."/>
            <person name="Cawley S."/>
            <person name="Dahlke C."/>
            <person name="Davenport L.B."/>
            <person name="Davies P."/>
            <person name="de Pablos B."/>
            <person name="Delcher A."/>
            <person name="Deng Z."/>
            <person name="Mays A.D."/>
            <person name="Dew I."/>
            <person name="Dietz S.M."/>
            <person name="Dodson K."/>
            <person name="Doup L.E."/>
            <person name="Downes M."/>
            <person name="Dugan-Rocha S."/>
            <person name="Dunkov B.C."/>
            <person name="Dunn P."/>
            <person name="Durbin K.J."/>
            <person name="Evangelista C.C."/>
            <person name="Ferraz C."/>
            <person name="Ferriera S."/>
            <person name="Fleischmann W."/>
            <person name="Fosler C."/>
            <person name="Gabrielian A.E."/>
            <person name="Garg N.S."/>
            <person name="Gelbart W.M."/>
            <person name="Glasser K."/>
            <person name="Glodek A."/>
            <person name="Gong F."/>
            <person name="Gorrell J.H."/>
            <person name="Gu Z."/>
            <person name="Guan P."/>
            <person name="Harris M."/>
            <person name="Harris N.L."/>
            <person name="Harvey D.A."/>
            <person name="Heiman T.J."/>
            <person name="Hernandez J.R."/>
            <person name="Houck J."/>
            <person name="Hostin D."/>
            <person name="Houston K.A."/>
            <person name="Howland T.J."/>
            <person name="Wei M.-H."/>
            <person name="Ibegwam C."/>
            <person name="Jalali M."/>
            <person name="Kalush F."/>
            <person name="Karpen G.H."/>
            <person name="Ke Z."/>
            <person name="Kennison J.A."/>
            <person name="Ketchum K.A."/>
            <person name="Kimmel B.E."/>
            <person name="Kodira C.D."/>
            <person name="Kraft C.L."/>
            <person name="Kravitz S."/>
            <person name="Kulp D."/>
            <person name="Lai Z."/>
            <person name="Lasko P."/>
            <person name="Lei Y."/>
            <person name="Levitsky A.A."/>
            <person name="Li J.H."/>
            <person name="Li Z."/>
            <person name="Liang Y."/>
            <person name="Lin X."/>
            <person name="Liu X."/>
            <person name="Mattei B."/>
            <person name="McIntosh T.C."/>
            <person name="McLeod M.P."/>
            <person name="McPherson D."/>
            <person name="Merkulov G."/>
            <person name="Milshina N.V."/>
            <person name="Mobarry C."/>
            <person name="Morris J."/>
            <person name="Moshrefi A."/>
            <person name="Mount S.M."/>
            <person name="Moy M."/>
            <person name="Murphy B."/>
            <person name="Murphy L."/>
            <person name="Muzny D.M."/>
            <person name="Nelson D.L."/>
            <person name="Nelson D.R."/>
            <person name="Nelson K.A."/>
            <person name="Nixon K."/>
            <person name="Nusskern D.R."/>
            <person name="Pacleb J.M."/>
            <person name="Palazzolo M."/>
            <person name="Pittman G.S."/>
            <person name="Pan S."/>
            <person name="Pollard J."/>
            <person name="Puri V."/>
            <person name="Reese M.G."/>
            <person name="Reinert K."/>
            <person name="Remington K."/>
            <person name="Saunders R.D.C."/>
            <person name="Scheeler F."/>
            <person name="Shen H."/>
            <person name="Shue B.C."/>
            <person name="Siden-Kiamos I."/>
            <person name="Simpson M."/>
            <person name="Skupski M.P."/>
            <person name="Smith T.J."/>
            <person name="Spier E."/>
            <person name="Spradling A.C."/>
            <person name="Stapleton M."/>
            <person name="Strong R."/>
            <person name="Sun E."/>
            <person name="Svirskas R."/>
            <person name="Tector C."/>
            <person name="Turner R."/>
            <person name="Venter E."/>
            <person name="Wang A.H."/>
            <person name="Wang X."/>
            <person name="Wang Z.-Y."/>
            <person name="Wassarman D.A."/>
            <person name="Weinstock G.M."/>
            <person name="Weissenbach J."/>
            <person name="Williams S.M."/>
            <person name="Woodage T."/>
            <person name="Worley K.C."/>
            <person name="Wu D."/>
            <person name="Yang S."/>
            <person name="Yao Q.A."/>
            <person name="Ye J."/>
            <person name="Yeh R.-F."/>
            <person name="Zaveri J.S."/>
            <person name="Zhan M."/>
            <person name="Zhang G."/>
            <person name="Zhao Q."/>
            <person name="Zheng L."/>
            <person name="Zheng X.H."/>
            <person name="Zhong F.N."/>
            <person name="Zhong W."/>
            <person name="Zhou X."/>
            <person name="Zhu S.C."/>
            <person name="Zhu X."/>
            <person name="Smith H.O."/>
            <person name="Gibbs R.A."/>
            <person name="Myers E.W."/>
            <person name="Rubin G.M."/>
            <person name="Venter J.C."/>
        </authorList>
    </citation>
    <scope>NUCLEOTIDE SEQUENCE [LARGE SCALE GENOMIC DNA]</scope>
    <source>
        <strain>Berkeley</strain>
    </source>
</reference>
<reference key="4">
    <citation type="journal article" date="2002" name="Genome Biol.">
        <title>Annotation of the Drosophila melanogaster euchromatic genome: a systematic review.</title>
        <authorList>
            <person name="Misra S."/>
            <person name="Crosby M.A."/>
            <person name="Mungall C.J."/>
            <person name="Matthews B.B."/>
            <person name="Campbell K.S."/>
            <person name="Hradecky P."/>
            <person name="Huang Y."/>
            <person name="Kaminker J.S."/>
            <person name="Millburn G.H."/>
            <person name="Prochnik S.E."/>
            <person name="Smith C.D."/>
            <person name="Tupy J.L."/>
            <person name="Whitfield E.J."/>
            <person name="Bayraktaroglu L."/>
            <person name="Berman B.P."/>
            <person name="Bettencourt B.R."/>
            <person name="Celniker S.E."/>
            <person name="de Grey A.D.N.J."/>
            <person name="Drysdale R.A."/>
            <person name="Harris N.L."/>
            <person name="Richter J."/>
            <person name="Russo S."/>
            <person name="Schroeder A.J."/>
            <person name="Shu S.Q."/>
            <person name="Stapleton M."/>
            <person name="Yamada C."/>
            <person name="Ashburner M."/>
            <person name="Gelbart W.M."/>
            <person name="Rubin G.M."/>
            <person name="Lewis S.E."/>
        </authorList>
    </citation>
    <scope>GENOME REANNOTATION</scope>
    <source>
        <strain>Berkeley</strain>
    </source>
</reference>
<reference key="5">
    <citation type="submission" date="2005-05" db="EMBL/GenBank/DDBJ databases">
        <authorList>
            <person name="Stapleton M."/>
            <person name="Carlson J.W."/>
            <person name="Chavez C."/>
            <person name="Frise E."/>
            <person name="George R.A."/>
            <person name="Pacleb J.M."/>
            <person name="Park S."/>
            <person name="Wan K.H."/>
            <person name="Yu C."/>
            <person name="Celniker S.E."/>
        </authorList>
    </citation>
    <scope>NUCLEOTIDE SEQUENCE [LARGE SCALE MRNA]</scope>
    <source>
        <strain>Berkeley</strain>
    </source>
</reference>
<reference key="6">
    <citation type="journal article" date="2002" name="Dev. Biol.">
        <title>gcm2 promotes glial cell differentiation and is required with glial cells missing for macrophage development in Drosophila.</title>
        <authorList>
            <person name="Alfonso T.B."/>
            <person name="Jones B.W."/>
        </authorList>
    </citation>
    <scope>NUCLEOTIDE SEQUENCE [MRNA] OF 5-606</scope>
    <scope>FUNCTION</scope>
    <scope>TISSUE SPECIFICITY</scope>
</reference>
<sequence length="606" mass="65674">MVVINGYSFKTQQLLTQQPDHSQLTQFVQPQSQSTHSVHPGPSPGQQQAGGSMTMPSSSTGKGKREWDINDAIVPHVPDQEFDEFNEWSDGHVRHIYSLHNEEAKKHISGWAMRNTNNHNVNILKKSCLGVLVCSQHCTLPNGSKINLRPAICDKARRKQEGKACPNKSCRGGRLEIKPCRGHCGYPVTHFWRHSGNAIFFQAKGVHDHLRPDPKNSSVSKRAFGRVPLAGKSANGSVAKKSVIAGLVKQAKQQHSLISKVLKRPAVSNPLAHTALDIYQYNACGKCAGYSHCTCSYLDDSTTARSHQLSQSSNYGTNSWPLSGSESSAPCETAANVFTVNHQHITYNYPIYHATPAAATAAPSKSPSLPYACSISELAAYQQSSSGNSFAMGVPVHGHTQCQAVAYDSSPQLATPEPEFINYSQIKHLGGGGGQEEISCKAEPGPTIKYNATVETQPYVEDNYDYYYSPKAEYEMQQHHHQQQQSHQQFGGNQTAGHHYYESSSGYNGVSYFDTGTTTAPGNTATGNGLEVGYGGYYDHYTSYEQQMAVAGGFATAGGSTAPTVAAPPGHPPPPPPPPTLTYHHHHHHHLHHPAAATGLAPSVTH</sequence>
<organism>
    <name type="scientific">Drosophila melanogaster</name>
    <name type="common">Fruit fly</name>
    <dbReference type="NCBI Taxonomy" id="7227"/>
    <lineage>
        <taxon>Eukaryota</taxon>
        <taxon>Metazoa</taxon>
        <taxon>Ecdysozoa</taxon>
        <taxon>Arthropoda</taxon>
        <taxon>Hexapoda</taxon>
        <taxon>Insecta</taxon>
        <taxon>Pterygota</taxon>
        <taxon>Neoptera</taxon>
        <taxon>Endopterygota</taxon>
        <taxon>Diptera</taxon>
        <taxon>Brachycera</taxon>
        <taxon>Muscomorpha</taxon>
        <taxon>Ephydroidea</taxon>
        <taxon>Drosophilidae</taxon>
        <taxon>Drosophila</taxon>
        <taxon>Sophophora</taxon>
    </lineage>
</organism>
<evidence type="ECO:0000255" key="1">
    <source>
        <dbReference type="PROSITE-ProRule" id="PRU00245"/>
    </source>
</evidence>
<evidence type="ECO:0000256" key="2">
    <source>
        <dbReference type="SAM" id="MobiDB-lite"/>
    </source>
</evidence>
<evidence type="ECO:0000269" key="3">
    <source>
    </source>
</evidence>
<evidence type="ECO:0000269" key="4">
    <source>
    </source>
</evidence>
<evidence type="ECO:0000305" key="5"/>
<comment type="function">
    <text evidence="3 4">Transcription factor with a minor role promoting glial cell differentiation and a more significant role in hematocyte differentiation. Gcm2, together with gcm, is required for the proliferation of plasmatocyte precursors, the expression of Croquemort protein, and the ability of plasmatocytes to convert into macrophages.</text>
</comment>
<comment type="subcellular location">
    <subcellularLocation>
        <location evidence="1">Nucleus</location>
    </subcellularLocation>
</comment>
<comment type="tissue specificity">
    <text evidence="3 4">Expressed in glial lineages within embryonic procephalic mesoderm. Expression is highest in hemocyte primordia and longitudinal and nerve root ganglia.</text>
</comment>
<comment type="developmental stage">
    <text evidence="3">First appears in embryos, levels decrease in larvae and peak again in 1 day old pupae. No expression is found in adults.</text>
</comment>
<comment type="sequence caution" evidence="5">
    <conflict type="miscellaneous discrepancy">
        <sequence resource="EMBL-CDS" id="AAM22408"/>
    </conflict>
    <text>Intron retention.</text>
</comment>
<name>GCM2_DROME</name>
<proteinExistence type="evidence at transcript level"/>
<dbReference type="EMBL" id="AF184664">
    <property type="protein sequence ID" value="AAF74349.1"/>
    <property type="molecule type" value="mRNA"/>
</dbReference>
<dbReference type="EMBL" id="AB056467">
    <property type="protein sequence ID" value="BAB83120.1"/>
    <property type="molecule type" value="mRNA"/>
</dbReference>
<dbReference type="EMBL" id="AE014134">
    <property type="protein sequence ID" value="AAF52793.2"/>
    <property type="molecule type" value="Genomic_DNA"/>
</dbReference>
<dbReference type="EMBL" id="BT022152">
    <property type="protein sequence ID" value="AAY51547.1"/>
    <property type="molecule type" value="mRNA"/>
</dbReference>
<dbReference type="EMBL" id="AF461416">
    <property type="protein sequence ID" value="AAM22408.1"/>
    <property type="status" value="ALT_SEQ"/>
    <property type="molecule type" value="mRNA"/>
</dbReference>
<dbReference type="RefSeq" id="NP_609302.1">
    <property type="nucleotide sequence ID" value="NM_135458.5"/>
</dbReference>
<dbReference type="SMR" id="Q9VLA2"/>
<dbReference type="BioGRID" id="60379">
    <property type="interactions" value="35"/>
</dbReference>
<dbReference type="FunCoup" id="Q9VLA2">
    <property type="interactions" value="40"/>
</dbReference>
<dbReference type="IntAct" id="Q9VLA2">
    <property type="interactions" value="13"/>
</dbReference>
<dbReference type="STRING" id="7227.FBpp0079435"/>
<dbReference type="PaxDb" id="7227-FBpp0089223"/>
<dbReference type="DNASU" id="34280"/>
<dbReference type="EnsemblMetazoa" id="FBtr0079837">
    <property type="protein sequence ID" value="FBpp0079435"/>
    <property type="gene ID" value="FBgn0019809"/>
</dbReference>
<dbReference type="GeneID" id="34280"/>
<dbReference type="KEGG" id="dme:Dmel_CG3858"/>
<dbReference type="AGR" id="FB:FBgn0019809"/>
<dbReference type="CTD" id="9247"/>
<dbReference type="FlyBase" id="FBgn0019809">
    <property type="gene designation" value="gcm2"/>
</dbReference>
<dbReference type="VEuPathDB" id="VectorBase:FBgn0019809"/>
<dbReference type="eggNOG" id="ENOG502QU2X">
    <property type="taxonomic scope" value="Eukaryota"/>
</dbReference>
<dbReference type="GeneTree" id="ENSGT00390000006777"/>
<dbReference type="HOGENOM" id="CLU_031237_0_0_1"/>
<dbReference type="InParanoid" id="Q9VLA2"/>
<dbReference type="OMA" id="VCSQHCT"/>
<dbReference type="OrthoDB" id="6241117at2759"/>
<dbReference type="BioGRID-ORCS" id="34280">
    <property type="hits" value="0 hits in 3 CRISPR screens"/>
</dbReference>
<dbReference type="GenomeRNAi" id="34280"/>
<dbReference type="PRO" id="PR:Q9VLA2"/>
<dbReference type="Proteomes" id="UP000000803">
    <property type="component" value="Chromosome 2L"/>
</dbReference>
<dbReference type="Bgee" id="FBgn0019809">
    <property type="expression patterns" value="Expressed in lateral ectoderm (Drosophila) and 17 other cell types or tissues"/>
</dbReference>
<dbReference type="GO" id="GO:0005634">
    <property type="term" value="C:nucleus"/>
    <property type="evidence" value="ECO:0000318"/>
    <property type="project" value="GO_Central"/>
</dbReference>
<dbReference type="GO" id="GO:0001228">
    <property type="term" value="F:DNA-binding transcription activator activity, RNA polymerase II-specific"/>
    <property type="evidence" value="ECO:0007669"/>
    <property type="project" value="InterPro"/>
</dbReference>
<dbReference type="GO" id="GO:0003700">
    <property type="term" value="F:DNA-binding transcription factor activity"/>
    <property type="evidence" value="ECO:0000314"/>
    <property type="project" value="UniProtKB"/>
</dbReference>
<dbReference type="GO" id="GO:0000981">
    <property type="term" value="F:DNA-binding transcription factor activity, RNA polymerase II-specific"/>
    <property type="evidence" value="ECO:0000318"/>
    <property type="project" value="GO_Central"/>
</dbReference>
<dbReference type="GO" id="GO:0000978">
    <property type="term" value="F:RNA polymerase II cis-regulatory region sequence-specific DNA binding"/>
    <property type="evidence" value="ECO:0000318"/>
    <property type="project" value="GO_Central"/>
</dbReference>
<dbReference type="GO" id="GO:0048813">
    <property type="term" value="P:dendrite morphogenesis"/>
    <property type="evidence" value="ECO:0000315"/>
    <property type="project" value="FlyBase"/>
</dbReference>
<dbReference type="GO" id="GO:0035165">
    <property type="term" value="P:embryonic crystal cell differentiation"/>
    <property type="evidence" value="ECO:0000315"/>
    <property type="project" value="FlyBase"/>
</dbReference>
<dbReference type="GO" id="GO:0021782">
    <property type="term" value="P:glial cell development"/>
    <property type="evidence" value="ECO:0000315"/>
    <property type="project" value="FlyBase"/>
</dbReference>
<dbReference type="GO" id="GO:0010001">
    <property type="term" value="P:glial cell differentiation"/>
    <property type="evidence" value="ECO:0000315"/>
    <property type="project" value="UniProtKB"/>
</dbReference>
<dbReference type="GO" id="GO:0042063">
    <property type="term" value="P:gliogenesis"/>
    <property type="evidence" value="ECO:0000318"/>
    <property type="project" value="GO_Central"/>
</dbReference>
<dbReference type="GO" id="GO:0042386">
    <property type="term" value="P:hemocyte differentiation"/>
    <property type="evidence" value="ECO:0000270"/>
    <property type="project" value="UniProtKB"/>
</dbReference>
<dbReference type="GO" id="GO:0042690">
    <property type="term" value="P:negative regulation of crystal cell differentiation"/>
    <property type="evidence" value="ECO:0000315"/>
    <property type="project" value="FlyBase"/>
</dbReference>
<dbReference type="GO" id="GO:0030182">
    <property type="term" value="P:neuron differentiation"/>
    <property type="evidence" value="ECO:0000315"/>
    <property type="project" value="FlyBase"/>
</dbReference>
<dbReference type="GO" id="GO:0042387">
    <property type="term" value="P:plasmatocyte differentiation"/>
    <property type="evidence" value="ECO:0000270"/>
    <property type="project" value="UniProtKB"/>
</dbReference>
<dbReference type="GO" id="GO:0006357">
    <property type="term" value="P:regulation of transcription by RNA polymerase II"/>
    <property type="evidence" value="ECO:0000318"/>
    <property type="project" value="GO_Central"/>
</dbReference>
<dbReference type="FunFam" id="3.30.70.3530:FF:000001">
    <property type="entry name" value="Chorion-specific transcription factor GCMb"/>
    <property type="match status" value="1"/>
</dbReference>
<dbReference type="Gene3D" id="2.20.25.670">
    <property type="entry name" value="GCM domain, large subdomain"/>
    <property type="match status" value="1"/>
</dbReference>
<dbReference type="Gene3D" id="3.30.70.3530">
    <property type="entry name" value="GCM motif"/>
    <property type="match status" value="1"/>
</dbReference>
<dbReference type="InterPro" id="IPR039791">
    <property type="entry name" value="GCM"/>
</dbReference>
<dbReference type="InterPro" id="IPR036115">
    <property type="entry name" value="GCM_dom_sf"/>
</dbReference>
<dbReference type="InterPro" id="IPR043020">
    <property type="entry name" value="GCM_large"/>
</dbReference>
<dbReference type="InterPro" id="IPR043021">
    <property type="entry name" value="GCM_small"/>
</dbReference>
<dbReference type="InterPro" id="IPR003902">
    <property type="entry name" value="Tscrpt_reg_GCM"/>
</dbReference>
<dbReference type="PANTHER" id="PTHR12414">
    <property type="entry name" value="GLIAL CELLS MISSING RELATED/GLIDE"/>
    <property type="match status" value="1"/>
</dbReference>
<dbReference type="PANTHER" id="PTHR12414:SF8">
    <property type="entry name" value="TRANSCRIPTION FACTOR GLIAL CELLS MISSING-RELATED"/>
    <property type="match status" value="1"/>
</dbReference>
<dbReference type="Pfam" id="PF03615">
    <property type="entry name" value="GCM"/>
    <property type="match status" value="1"/>
</dbReference>
<dbReference type="SUPFAM" id="SSF90073">
    <property type="entry name" value="GCM domain"/>
    <property type="match status" value="1"/>
</dbReference>
<dbReference type="PROSITE" id="PS50807">
    <property type="entry name" value="GCM"/>
    <property type="match status" value="1"/>
</dbReference>
<accession>Q9VLA2</accession>
<accession>Q4V704</accession>
<accession>Q8N012</accession>
<accession>Q8WST6</accession>
<accession>Q9NCQ2</accession>
<feature type="chain" id="PRO_0000126653" description="Transcription factor glial cells missing 2">
    <location>
        <begin position="1"/>
        <end position="606"/>
    </location>
</feature>
<feature type="DNA-binding region" description="GCM" evidence="1">
    <location>
        <begin position="65"/>
        <end position="224"/>
    </location>
</feature>
<feature type="region of interest" description="Disordered" evidence="2">
    <location>
        <begin position="20"/>
        <end position="65"/>
    </location>
</feature>
<feature type="region of interest" description="Disordered" evidence="2">
    <location>
        <begin position="475"/>
        <end position="501"/>
    </location>
</feature>
<feature type="region of interest" description="Disordered" evidence="2">
    <location>
        <begin position="561"/>
        <end position="606"/>
    </location>
</feature>
<feature type="compositionally biased region" description="Polar residues" evidence="2">
    <location>
        <begin position="20"/>
        <end position="37"/>
    </location>
</feature>
<feature type="compositionally biased region" description="Low complexity" evidence="2">
    <location>
        <begin position="44"/>
        <end position="61"/>
    </location>
</feature>
<feature type="compositionally biased region" description="Polar residues" evidence="2">
    <location>
        <begin position="490"/>
        <end position="501"/>
    </location>
</feature>
<feature type="compositionally biased region" description="Pro residues" evidence="2">
    <location>
        <begin position="569"/>
        <end position="580"/>
    </location>
</feature>
<feature type="compositionally biased region" description="Basic residues" evidence="2">
    <location>
        <begin position="583"/>
        <end position="593"/>
    </location>
</feature>
<feature type="compositionally biased region" description="Low complexity" evidence="2">
    <location>
        <begin position="594"/>
        <end position="606"/>
    </location>
</feature>
<feature type="sequence conflict" description="In Ref. 2; BAB83120." evidence="5" ref="2">
    <original>S</original>
    <variation>N</variation>
    <location>
        <position position="32"/>
    </location>
</feature>
<feature type="sequence conflict" description="In Ref. 2; BAB83120 and 6; AAM22408." evidence="5" ref="2 6">
    <original>S</original>
    <variation>P</variation>
    <location>
        <position position="37"/>
    </location>
</feature>
<feature type="sequence conflict" description="In Ref. 2; BAB83120." evidence="5" ref="2">
    <original>G</original>
    <variation>C</variation>
    <location>
        <position position="41"/>
    </location>
</feature>
<feature type="sequence conflict" description="In Ref. 6; AAM22408." evidence="5" ref="6">
    <original>G</original>
    <variation>V</variation>
    <location>
        <position position="50"/>
    </location>
</feature>
<feature type="sequence conflict" description="In Ref. 2; BAB83120." evidence="5" ref="2">
    <original>T</original>
    <variation>A</variation>
    <location>
        <position position="60"/>
    </location>
</feature>
<feature type="sequence conflict" description="In Ref. 6; AAM22408." evidence="5" ref="6">
    <original>A</original>
    <variation>T</variation>
    <location>
        <position position="288"/>
    </location>
</feature>
<feature type="sequence conflict" description="In Ref. 2; BAB83120." evidence="5" ref="2">
    <original>S</original>
    <variation>N</variation>
    <location>
        <position position="301"/>
    </location>
</feature>
<feature type="sequence conflict" description="In Ref. 6; AAM22408." evidence="5" ref="6">
    <original>G</original>
    <variation>S</variation>
    <location>
        <position position="433"/>
    </location>
</feature>
<feature type="sequence conflict" description="In Ref. 6; AAM22408." evidence="5" ref="6">
    <original>Q</original>
    <variation>E</variation>
    <location>
        <position position="489"/>
    </location>
</feature>
<feature type="sequence conflict" description="In Ref. 2; BAB83120." evidence="5" ref="2">
    <original>S</original>
    <variation>N</variation>
    <location>
        <position position="543"/>
    </location>
</feature>
<feature type="sequence conflict" description="In Ref. 2; BAB83120 and 6; AAM22408." evidence="5" ref="2 6">
    <original>T</original>
    <variation>A</variation>
    <location>
        <position position="564"/>
    </location>
</feature>